<name>DCAM_HORCH</name>
<gene>
    <name type="primary">SAMDC</name>
</gene>
<protein>
    <recommendedName>
        <fullName>S-adenosylmethionine decarboxylase proenzyme</fullName>
        <shortName>AdoMetDC</shortName>
        <shortName>SAMDC</shortName>
        <ecNumber>4.1.1.50</ecNumber>
    </recommendedName>
    <component>
        <recommendedName>
            <fullName>S-adenosylmethionine decarboxylase alpha chain</fullName>
        </recommendedName>
    </component>
    <component>
        <recommendedName>
            <fullName>S-adenosylmethionine decarboxylase beta chain</fullName>
        </recommendedName>
    </component>
</protein>
<evidence type="ECO:0000250" key="1"/>
<evidence type="ECO:0000305" key="2"/>
<organism>
    <name type="scientific">Hordeum chilense</name>
    <name type="common">Barley</name>
    <name type="synonym">Critesion chilense</name>
    <dbReference type="NCBI Taxonomy" id="15565"/>
    <lineage>
        <taxon>Eukaryota</taxon>
        <taxon>Viridiplantae</taxon>
        <taxon>Streptophyta</taxon>
        <taxon>Embryophyta</taxon>
        <taxon>Tracheophyta</taxon>
        <taxon>Spermatophyta</taxon>
        <taxon>Magnoliopsida</taxon>
        <taxon>Liliopsida</taxon>
        <taxon>Poales</taxon>
        <taxon>Poaceae</taxon>
        <taxon>BOP clade</taxon>
        <taxon>Pooideae</taxon>
        <taxon>Triticodae</taxon>
        <taxon>Triticeae</taxon>
        <taxon>Hordeinae</taxon>
        <taxon>Hordeum</taxon>
    </lineage>
</organism>
<keyword id="KW-0068">Autocatalytic cleavage</keyword>
<keyword id="KW-0210">Decarboxylase</keyword>
<keyword id="KW-0456">Lyase</keyword>
<keyword id="KW-0620">Polyamine biosynthesis</keyword>
<keyword id="KW-0670">Pyruvate</keyword>
<keyword id="KW-0949">S-adenosyl-L-methionine</keyword>
<keyword id="KW-0704">Schiff base</keyword>
<keyword id="KW-0745">Spermidine biosynthesis</keyword>
<keyword id="KW-0865">Zymogen</keyword>
<proteinExistence type="evidence at transcript level"/>
<accession>Q42829</accession>
<feature type="chain" id="PRO_0000030009" description="S-adenosylmethionine decarboxylase beta chain" evidence="1">
    <location>
        <begin position="1"/>
        <end position="70"/>
    </location>
</feature>
<feature type="chain" id="PRO_0000030010" description="S-adenosylmethionine decarboxylase alpha chain" evidence="1">
    <location>
        <begin position="71"/>
        <end position="393"/>
    </location>
</feature>
<feature type="active site" evidence="1">
    <location>
        <position position="11"/>
    </location>
</feature>
<feature type="active site" evidence="1">
    <location>
        <position position="14"/>
    </location>
</feature>
<feature type="active site" description="Schiff-base intermediate with substrate; via pyruvic acid" evidence="1">
    <location>
        <position position="71"/>
    </location>
</feature>
<feature type="active site" description="Proton donor; for catalytic activity" evidence="1">
    <location>
        <position position="85"/>
    </location>
</feature>
<feature type="active site" description="Proton acceptor; for processing activity" evidence="1">
    <location>
        <position position="236"/>
    </location>
</feature>
<feature type="active site" description="Proton acceptor; for processing activity" evidence="1">
    <location>
        <position position="249"/>
    </location>
</feature>
<feature type="site" description="Cleavage (non-hydrolytic); by autolysis" evidence="1">
    <location>
        <begin position="70"/>
        <end position="71"/>
    </location>
</feature>
<feature type="modified residue" description="Pyruvic acid (Ser); by autocatalysis" evidence="1">
    <location>
        <position position="71"/>
    </location>
</feature>
<reference key="1">
    <citation type="journal article" date="1996" name="Plant Mol. Biol.">
        <title>Isolation and characterization of a Tritordeum cDNA encoding S-adenosylmethionine decarboxylase that is circadian-clock-regulated.</title>
        <authorList>
            <person name="Dresselhaus T."/>
            <person name="Barcelo P."/>
            <person name="Hagel C."/>
            <person name="Loerz H."/>
            <person name="Humbeck K."/>
        </authorList>
    </citation>
    <scope>NUCLEOTIDE SEQUENCE [MRNA]</scope>
    <source>
        <tissue>Leaf</tissue>
    </source>
</reference>
<dbReference type="EC" id="4.1.1.50"/>
<dbReference type="EMBL" id="X83881">
    <property type="protein sequence ID" value="CAA58762.1"/>
    <property type="molecule type" value="mRNA"/>
</dbReference>
<dbReference type="PIR" id="S69191">
    <property type="entry name" value="S69191"/>
</dbReference>
<dbReference type="SMR" id="Q42829"/>
<dbReference type="UniPathway" id="UPA00331">
    <property type="reaction ID" value="UER00451"/>
</dbReference>
<dbReference type="GO" id="GO:0005829">
    <property type="term" value="C:cytosol"/>
    <property type="evidence" value="ECO:0007669"/>
    <property type="project" value="TreeGrafter"/>
</dbReference>
<dbReference type="GO" id="GO:0004014">
    <property type="term" value="F:adenosylmethionine decarboxylase activity"/>
    <property type="evidence" value="ECO:0007669"/>
    <property type="project" value="UniProtKB-EC"/>
</dbReference>
<dbReference type="GO" id="GO:0008295">
    <property type="term" value="P:spermidine biosynthetic process"/>
    <property type="evidence" value="ECO:0007669"/>
    <property type="project" value="UniProtKB-KW"/>
</dbReference>
<dbReference type="GO" id="GO:0006597">
    <property type="term" value="P:spermine biosynthetic process"/>
    <property type="evidence" value="ECO:0007669"/>
    <property type="project" value="InterPro"/>
</dbReference>
<dbReference type="FunFam" id="3.30.360.50:FF:000001">
    <property type="entry name" value="S-adenosylmethionine decarboxylase proenzyme"/>
    <property type="match status" value="1"/>
</dbReference>
<dbReference type="FunFam" id="3.60.90.10:FF:000002">
    <property type="entry name" value="S-adenosylmethionine decarboxylase proenzyme"/>
    <property type="match status" value="1"/>
</dbReference>
<dbReference type="Gene3D" id="3.30.360.50">
    <property type="entry name" value="S-adenosylmethionine decarboxylase"/>
    <property type="match status" value="1"/>
</dbReference>
<dbReference type="Gene3D" id="3.60.90.10">
    <property type="entry name" value="S-adenosylmethionine decarboxylase"/>
    <property type="match status" value="1"/>
</dbReference>
<dbReference type="InterPro" id="IPR048283">
    <property type="entry name" value="AdoMetDC-like"/>
</dbReference>
<dbReference type="InterPro" id="IPR001985">
    <property type="entry name" value="S-AdoMet_decarboxylase_euk"/>
</dbReference>
<dbReference type="InterPro" id="IPR016067">
    <property type="entry name" value="S-AdoMet_deCO2ase_core"/>
</dbReference>
<dbReference type="InterPro" id="IPR018166">
    <property type="entry name" value="S-AdoMet_deCO2ase_CS"/>
</dbReference>
<dbReference type="NCBIfam" id="TIGR00535">
    <property type="entry name" value="SAM_DCase"/>
    <property type="match status" value="1"/>
</dbReference>
<dbReference type="PANTHER" id="PTHR11570">
    <property type="entry name" value="S-ADENOSYLMETHIONINE DECARBOXYLASE"/>
    <property type="match status" value="1"/>
</dbReference>
<dbReference type="PANTHER" id="PTHR11570:SF24">
    <property type="entry name" value="S-ADENOSYLMETHIONINE DECARBOXYLASE PROENZYME"/>
    <property type="match status" value="1"/>
</dbReference>
<dbReference type="Pfam" id="PF01536">
    <property type="entry name" value="SAM_decarbox"/>
    <property type="match status" value="1"/>
</dbReference>
<dbReference type="PIRSF" id="PIRSF001355">
    <property type="entry name" value="S-AdenosylMet_decarboxylase"/>
    <property type="match status" value="1"/>
</dbReference>
<dbReference type="SUPFAM" id="SSF56276">
    <property type="entry name" value="S-adenosylmethionine decarboxylase"/>
    <property type="match status" value="1"/>
</dbReference>
<dbReference type="PROSITE" id="PS01336">
    <property type="entry name" value="ADOMETDC"/>
    <property type="match status" value="1"/>
</dbReference>
<comment type="catalytic activity">
    <reaction>
        <text>S-adenosyl-L-methionine + H(+) = S-adenosyl 3-(methylsulfanyl)propylamine + CO2</text>
        <dbReference type="Rhea" id="RHEA:15981"/>
        <dbReference type="ChEBI" id="CHEBI:15378"/>
        <dbReference type="ChEBI" id="CHEBI:16526"/>
        <dbReference type="ChEBI" id="CHEBI:57443"/>
        <dbReference type="ChEBI" id="CHEBI:59789"/>
        <dbReference type="EC" id="4.1.1.50"/>
    </reaction>
</comment>
<comment type="cofactor">
    <cofactor>
        <name>pyruvate</name>
        <dbReference type="ChEBI" id="CHEBI:15361"/>
    </cofactor>
    <text>Binds 1 pyruvoyl group covalently per subunit.</text>
</comment>
<comment type="pathway">
    <text>Amine and polyamine biosynthesis; S-adenosylmethioninamine biosynthesis; S-adenosylmethioninamine from S-adenosyl-L-methionine: step 1/1.</text>
</comment>
<comment type="PTM">
    <text evidence="1">Is synthesized initially as an inactive proenzyme. Formation of the active enzyme involves a self-maturation process in which the active site pyruvoyl group is generated from an internal serine residue via an autocatalytic post-translational modification. Two non-identical subunits are generated from the proenzyme in this reaction, and the pyruvate is formed at the N-terminus of the alpha chain, which is derived from the carboxyl end of the proenzyme. The post-translation cleavage follows an unusual pathway, termed non-hydrolytic serinolysis, in which the side chain hydroxyl group of the serine supplies its oxygen atom to form the C-terminus of the beta chain, while the remainder of the serine residue undergoes an oxidative deamination to produce ammonia and the pyruvoyl group blocking the N-terminus of the alpha chain (By similarity).</text>
</comment>
<comment type="similarity">
    <text evidence="2">Belongs to the eukaryotic AdoMetDC family.</text>
</comment>
<sequence>MAAPVSAIGFEGYEKRLEITFSEASIFADPHGRGLRALSRAQIDSVLDLARCTIVSELSNKDFDSYVLSESSLFIYSQKIVIKTCGTTMLLLTIPRILELAEELCMPLAAVKYSRGMFIFPGAQPAPHRSFSEEVDVLNRYFGHLNSGGNAYVIGDPAKPGQKWHIYYATEQPEQPMVTLEMCMTGLDKTKASVFFKTHADGHVSCAKEMTKLSGISDIIPEMEVCDFDFEPCGYSMNAINGSAFSTIHVTPEDGFSYASYEVQGMDASALAYGDIVKRVLRCFGPSEFSVAVTIFGGRGHAATWGKKLDAEAYDCNNVVEQELPCGGVLIYQSFAANEELAVSAGSPRSVFHCFENVESGHPLVKEGKLANLLAWRAEEESLEEGTGALLCE</sequence>